<proteinExistence type="inferred from homology"/>
<dbReference type="EMBL" id="CP000539">
    <property type="protein sequence ID" value="ABM40561.1"/>
    <property type="molecule type" value="Genomic_DNA"/>
</dbReference>
<dbReference type="SMR" id="A1W2T6"/>
<dbReference type="STRING" id="232721.Ajs_0307"/>
<dbReference type="KEGG" id="ajs:Ajs_0307"/>
<dbReference type="eggNOG" id="COG0224">
    <property type="taxonomic scope" value="Bacteria"/>
</dbReference>
<dbReference type="HOGENOM" id="CLU_050669_0_1_4"/>
<dbReference type="Proteomes" id="UP000000645">
    <property type="component" value="Chromosome"/>
</dbReference>
<dbReference type="GO" id="GO:0005886">
    <property type="term" value="C:plasma membrane"/>
    <property type="evidence" value="ECO:0007669"/>
    <property type="project" value="UniProtKB-SubCell"/>
</dbReference>
<dbReference type="GO" id="GO:0045259">
    <property type="term" value="C:proton-transporting ATP synthase complex"/>
    <property type="evidence" value="ECO:0007669"/>
    <property type="project" value="UniProtKB-KW"/>
</dbReference>
<dbReference type="GO" id="GO:0005524">
    <property type="term" value="F:ATP binding"/>
    <property type="evidence" value="ECO:0007669"/>
    <property type="project" value="UniProtKB-UniRule"/>
</dbReference>
<dbReference type="GO" id="GO:0046933">
    <property type="term" value="F:proton-transporting ATP synthase activity, rotational mechanism"/>
    <property type="evidence" value="ECO:0007669"/>
    <property type="project" value="UniProtKB-UniRule"/>
</dbReference>
<dbReference type="GO" id="GO:0042777">
    <property type="term" value="P:proton motive force-driven plasma membrane ATP synthesis"/>
    <property type="evidence" value="ECO:0007669"/>
    <property type="project" value="UniProtKB-UniRule"/>
</dbReference>
<dbReference type="CDD" id="cd12151">
    <property type="entry name" value="F1-ATPase_gamma"/>
    <property type="match status" value="1"/>
</dbReference>
<dbReference type="FunFam" id="1.10.287.80:FF:000005">
    <property type="entry name" value="ATP synthase gamma chain"/>
    <property type="match status" value="1"/>
</dbReference>
<dbReference type="Gene3D" id="3.40.1380.10">
    <property type="match status" value="1"/>
</dbReference>
<dbReference type="Gene3D" id="1.10.287.80">
    <property type="entry name" value="ATP synthase, gamma subunit, helix hairpin domain"/>
    <property type="match status" value="1"/>
</dbReference>
<dbReference type="HAMAP" id="MF_00815">
    <property type="entry name" value="ATP_synth_gamma_bact"/>
    <property type="match status" value="1"/>
</dbReference>
<dbReference type="InterPro" id="IPR035968">
    <property type="entry name" value="ATP_synth_F1_ATPase_gsu"/>
</dbReference>
<dbReference type="InterPro" id="IPR000131">
    <property type="entry name" value="ATP_synth_F1_gsu"/>
</dbReference>
<dbReference type="InterPro" id="IPR023632">
    <property type="entry name" value="ATP_synth_F1_gsu_CS"/>
</dbReference>
<dbReference type="NCBIfam" id="TIGR01146">
    <property type="entry name" value="ATPsyn_F1gamma"/>
    <property type="match status" value="1"/>
</dbReference>
<dbReference type="NCBIfam" id="NF004144">
    <property type="entry name" value="PRK05621.1-1"/>
    <property type="match status" value="1"/>
</dbReference>
<dbReference type="PANTHER" id="PTHR11693">
    <property type="entry name" value="ATP SYNTHASE GAMMA CHAIN"/>
    <property type="match status" value="1"/>
</dbReference>
<dbReference type="PANTHER" id="PTHR11693:SF22">
    <property type="entry name" value="ATP SYNTHASE SUBUNIT GAMMA, MITOCHONDRIAL"/>
    <property type="match status" value="1"/>
</dbReference>
<dbReference type="Pfam" id="PF00231">
    <property type="entry name" value="ATP-synt"/>
    <property type="match status" value="1"/>
</dbReference>
<dbReference type="PRINTS" id="PR00126">
    <property type="entry name" value="ATPASEGAMMA"/>
</dbReference>
<dbReference type="SUPFAM" id="SSF52943">
    <property type="entry name" value="ATP synthase (F1-ATPase), gamma subunit"/>
    <property type="match status" value="1"/>
</dbReference>
<dbReference type="PROSITE" id="PS00153">
    <property type="entry name" value="ATPASE_GAMMA"/>
    <property type="match status" value="1"/>
</dbReference>
<sequence length="288" mass="31177">MAAGKEIRGKIKSVENTKKITKAMEMVAASKMRKAQDRMRAARPYAEKVRNIAAHLGEANPEYVHPFMKANDAKAAGIIVVTTDKGLCGGMNTNVLRAVTTKLRELQSTGVDVQSVAIGNKGLGFLNRVGAKVVAHATGLGDTPHLDKLIGPVKVLLDAYAEGKINAVYLSYTKFINTMKQESVVEQLLPLSSEQMQAQKTGHGWDYIYEPDAQSVIDELLVRYVESLIYQAVAENMASEQSARMVAMKAATDNAGNVINELKLVYNKTRQAAITKELSEIVAGAAAV</sequence>
<name>ATPG_ACISJ</name>
<gene>
    <name evidence="1" type="primary">atpG</name>
    <name type="ordered locus">Ajs_0307</name>
</gene>
<evidence type="ECO:0000255" key="1">
    <source>
        <dbReference type="HAMAP-Rule" id="MF_00815"/>
    </source>
</evidence>
<comment type="function">
    <text evidence="1">Produces ATP from ADP in the presence of a proton gradient across the membrane. The gamma chain is believed to be important in regulating ATPase activity and the flow of protons through the CF(0) complex.</text>
</comment>
<comment type="subunit">
    <text evidence="1">F-type ATPases have 2 components, CF(1) - the catalytic core - and CF(0) - the membrane proton channel. CF(1) has five subunits: alpha(3), beta(3), gamma(1), delta(1), epsilon(1). CF(0) has three main subunits: a, b and c.</text>
</comment>
<comment type="subcellular location">
    <subcellularLocation>
        <location evidence="1">Cell inner membrane</location>
        <topology evidence="1">Peripheral membrane protein</topology>
    </subcellularLocation>
</comment>
<comment type="similarity">
    <text evidence="1">Belongs to the ATPase gamma chain family.</text>
</comment>
<reference key="1">
    <citation type="submission" date="2006-12" db="EMBL/GenBank/DDBJ databases">
        <title>Complete sequence of chromosome 1 of Acidovorax sp. JS42.</title>
        <authorList>
            <person name="Copeland A."/>
            <person name="Lucas S."/>
            <person name="Lapidus A."/>
            <person name="Barry K."/>
            <person name="Detter J.C."/>
            <person name="Glavina del Rio T."/>
            <person name="Dalin E."/>
            <person name="Tice H."/>
            <person name="Pitluck S."/>
            <person name="Chertkov O."/>
            <person name="Brettin T."/>
            <person name="Bruce D."/>
            <person name="Han C."/>
            <person name="Tapia R."/>
            <person name="Gilna P."/>
            <person name="Schmutz J."/>
            <person name="Larimer F."/>
            <person name="Land M."/>
            <person name="Hauser L."/>
            <person name="Kyrpides N."/>
            <person name="Kim E."/>
            <person name="Stahl D."/>
            <person name="Richardson P."/>
        </authorList>
    </citation>
    <scope>NUCLEOTIDE SEQUENCE [LARGE SCALE GENOMIC DNA]</scope>
    <source>
        <strain>JS42</strain>
    </source>
</reference>
<protein>
    <recommendedName>
        <fullName evidence="1">ATP synthase gamma chain</fullName>
    </recommendedName>
    <alternativeName>
        <fullName evidence="1">ATP synthase F1 sector gamma subunit</fullName>
    </alternativeName>
    <alternativeName>
        <fullName evidence="1">F-ATPase gamma subunit</fullName>
    </alternativeName>
</protein>
<organism>
    <name type="scientific">Acidovorax sp. (strain JS42)</name>
    <dbReference type="NCBI Taxonomy" id="232721"/>
    <lineage>
        <taxon>Bacteria</taxon>
        <taxon>Pseudomonadati</taxon>
        <taxon>Pseudomonadota</taxon>
        <taxon>Betaproteobacteria</taxon>
        <taxon>Burkholderiales</taxon>
        <taxon>Comamonadaceae</taxon>
        <taxon>Acidovorax</taxon>
    </lineage>
</organism>
<feature type="chain" id="PRO_1000053145" description="ATP synthase gamma chain">
    <location>
        <begin position="1"/>
        <end position="288"/>
    </location>
</feature>
<accession>A1W2T6</accession>
<keyword id="KW-0066">ATP synthesis</keyword>
<keyword id="KW-0997">Cell inner membrane</keyword>
<keyword id="KW-1003">Cell membrane</keyword>
<keyword id="KW-0139">CF(1)</keyword>
<keyword id="KW-0375">Hydrogen ion transport</keyword>
<keyword id="KW-0406">Ion transport</keyword>
<keyword id="KW-0472">Membrane</keyword>
<keyword id="KW-0813">Transport</keyword>